<keyword id="KW-0963">Cytoplasm</keyword>
<keyword id="KW-0413">Isomerase</keyword>
<keyword id="KW-1185">Reference proteome</keyword>
<protein>
    <recommendedName>
        <fullName>Ribose-5-phosphate isomerase</fullName>
        <ecNumber>5.3.1.6</ecNumber>
    </recommendedName>
    <alternativeName>
        <fullName>D-ribose-5-phosphate ketol-isomerase</fullName>
    </alternativeName>
    <alternativeName>
        <fullName>Phosphoriboisomerase</fullName>
    </alternativeName>
</protein>
<name>RPIA_CANGA</name>
<dbReference type="EC" id="5.3.1.6"/>
<dbReference type="EMBL" id="CR380958">
    <property type="protein sequence ID" value="CAG61906.1"/>
    <property type="molecule type" value="Genomic_DNA"/>
</dbReference>
<dbReference type="RefSeq" id="XP_448936.1">
    <property type="nucleotide sequence ID" value="XM_448936.1"/>
</dbReference>
<dbReference type="SMR" id="Q6FLF8"/>
<dbReference type="FunCoup" id="Q6FLF8">
    <property type="interactions" value="985"/>
</dbReference>
<dbReference type="STRING" id="284593.Q6FLF8"/>
<dbReference type="EnsemblFungi" id="CAGL0L03740g-T">
    <property type="protein sequence ID" value="CAGL0L03740g-T-p1"/>
    <property type="gene ID" value="CAGL0L03740g"/>
</dbReference>
<dbReference type="KEGG" id="cgr:2890542"/>
<dbReference type="CGD" id="CAL0135496">
    <property type="gene designation" value="RKI1"/>
</dbReference>
<dbReference type="VEuPathDB" id="FungiDB:CAGL0L03740g"/>
<dbReference type="eggNOG" id="KOG3075">
    <property type="taxonomic scope" value="Eukaryota"/>
</dbReference>
<dbReference type="HOGENOM" id="CLU_056590_0_0_1"/>
<dbReference type="InParanoid" id="Q6FLF8"/>
<dbReference type="OMA" id="ACHVQEK"/>
<dbReference type="UniPathway" id="UPA00115">
    <property type="reaction ID" value="UER00412"/>
</dbReference>
<dbReference type="Proteomes" id="UP000002428">
    <property type="component" value="Chromosome L"/>
</dbReference>
<dbReference type="GO" id="GO:0005737">
    <property type="term" value="C:cytoplasm"/>
    <property type="evidence" value="ECO:0007669"/>
    <property type="project" value="UniProtKB-SubCell"/>
</dbReference>
<dbReference type="GO" id="GO:0004751">
    <property type="term" value="F:ribose-5-phosphate isomerase activity"/>
    <property type="evidence" value="ECO:0007669"/>
    <property type="project" value="UniProtKB-EC"/>
</dbReference>
<dbReference type="GO" id="GO:0006014">
    <property type="term" value="P:D-ribose metabolic process"/>
    <property type="evidence" value="ECO:0007669"/>
    <property type="project" value="TreeGrafter"/>
</dbReference>
<dbReference type="GO" id="GO:0009052">
    <property type="term" value="P:pentose-phosphate shunt, non-oxidative branch"/>
    <property type="evidence" value="ECO:0007669"/>
    <property type="project" value="InterPro"/>
</dbReference>
<dbReference type="GO" id="GO:0008615">
    <property type="term" value="P:pyridoxine biosynthetic process"/>
    <property type="evidence" value="ECO:0007669"/>
    <property type="project" value="EnsemblFungi"/>
</dbReference>
<dbReference type="CDD" id="cd01398">
    <property type="entry name" value="RPI_A"/>
    <property type="match status" value="1"/>
</dbReference>
<dbReference type="FunFam" id="3.40.50.1360:FF:000014">
    <property type="entry name" value="Ribose 5-phosphate isomerase"/>
    <property type="match status" value="1"/>
</dbReference>
<dbReference type="FunFam" id="3.30.70.260:FF:000053">
    <property type="entry name" value="Ribose-5-phosphate isomerase, putative"/>
    <property type="match status" value="1"/>
</dbReference>
<dbReference type="Gene3D" id="3.30.70.260">
    <property type="match status" value="1"/>
</dbReference>
<dbReference type="Gene3D" id="3.40.50.1360">
    <property type="match status" value="1"/>
</dbReference>
<dbReference type="InterPro" id="IPR037171">
    <property type="entry name" value="NagB/RpiA_transferase-like"/>
</dbReference>
<dbReference type="InterPro" id="IPR004788">
    <property type="entry name" value="Ribose5P_isomerase_type_A"/>
</dbReference>
<dbReference type="NCBIfam" id="NF001924">
    <property type="entry name" value="PRK00702.1"/>
    <property type="match status" value="1"/>
</dbReference>
<dbReference type="NCBIfam" id="TIGR00021">
    <property type="entry name" value="rpiA"/>
    <property type="match status" value="1"/>
</dbReference>
<dbReference type="PANTHER" id="PTHR11934">
    <property type="entry name" value="RIBOSE-5-PHOSPHATE ISOMERASE"/>
    <property type="match status" value="1"/>
</dbReference>
<dbReference type="PANTHER" id="PTHR11934:SF0">
    <property type="entry name" value="RIBOSE-5-PHOSPHATE ISOMERASE"/>
    <property type="match status" value="1"/>
</dbReference>
<dbReference type="Pfam" id="PF06026">
    <property type="entry name" value="Rib_5-P_isom_A"/>
    <property type="match status" value="1"/>
</dbReference>
<dbReference type="SUPFAM" id="SSF75445">
    <property type="entry name" value="D-ribose-5-phosphate isomerase (RpiA), lid domain"/>
    <property type="match status" value="1"/>
</dbReference>
<dbReference type="SUPFAM" id="SSF100950">
    <property type="entry name" value="NagB/RpiA/CoA transferase-like"/>
    <property type="match status" value="1"/>
</dbReference>
<sequence length="260" mass="28519">MSYTPLPNINDFPTLGNPLEDAKRAAAYRAVDENLNFDEHRIIGVGSGSTVVYVAERIGQYLKDEKYHDKVSKFICIPTGYQSRNLIQDNGLILGSIEQHPHVDIAFDGADEVDHNLQLIKGGGACLFQEKLVSTSAKIFIVVADSRKKSDTNLGINWKRGVPIEIVPSAWSRVQHDLTSILHANSAPVRQGGSAKAGPVVTDNMNFLIDADFGEIQDPKALHEQIKMLVGVVETGLFIDNAHRAYFGKPDGSVEVIDKK</sequence>
<evidence type="ECO:0000305" key="1"/>
<proteinExistence type="inferred from homology"/>
<accession>Q6FLF8</accession>
<organism>
    <name type="scientific">Candida glabrata (strain ATCC 2001 / BCRC 20586 / JCM 3761 / NBRC 0622 / NRRL Y-65 / CBS 138)</name>
    <name type="common">Yeast</name>
    <name type="synonym">Nakaseomyces glabratus</name>
    <dbReference type="NCBI Taxonomy" id="284593"/>
    <lineage>
        <taxon>Eukaryota</taxon>
        <taxon>Fungi</taxon>
        <taxon>Dikarya</taxon>
        <taxon>Ascomycota</taxon>
        <taxon>Saccharomycotina</taxon>
        <taxon>Saccharomycetes</taxon>
        <taxon>Saccharomycetales</taxon>
        <taxon>Saccharomycetaceae</taxon>
        <taxon>Nakaseomyces</taxon>
    </lineage>
</organism>
<feature type="chain" id="PRO_0000339885" description="Ribose-5-phosphate isomerase">
    <location>
        <begin position="1"/>
        <end position="260"/>
    </location>
</feature>
<reference key="1">
    <citation type="journal article" date="2004" name="Nature">
        <title>Genome evolution in yeasts.</title>
        <authorList>
            <person name="Dujon B."/>
            <person name="Sherman D."/>
            <person name="Fischer G."/>
            <person name="Durrens P."/>
            <person name="Casaregola S."/>
            <person name="Lafontaine I."/>
            <person name="de Montigny J."/>
            <person name="Marck C."/>
            <person name="Neuveglise C."/>
            <person name="Talla E."/>
            <person name="Goffard N."/>
            <person name="Frangeul L."/>
            <person name="Aigle M."/>
            <person name="Anthouard V."/>
            <person name="Babour A."/>
            <person name="Barbe V."/>
            <person name="Barnay S."/>
            <person name="Blanchin S."/>
            <person name="Beckerich J.-M."/>
            <person name="Beyne E."/>
            <person name="Bleykasten C."/>
            <person name="Boisrame A."/>
            <person name="Boyer J."/>
            <person name="Cattolico L."/>
            <person name="Confanioleri F."/>
            <person name="de Daruvar A."/>
            <person name="Despons L."/>
            <person name="Fabre E."/>
            <person name="Fairhead C."/>
            <person name="Ferry-Dumazet H."/>
            <person name="Groppi A."/>
            <person name="Hantraye F."/>
            <person name="Hennequin C."/>
            <person name="Jauniaux N."/>
            <person name="Joyet P."/>
            <person name="Kachouri R."/>
            <person name="Kerrest A."/>
            <person name="Koszul R."/>
            <person name="Lemaire M."/>
            <person name="Lesur I."/>
            <person name="Ma L."/>
            <person name="Muller H."/>
            <person name="Nicaud J.-M."/>
            <person name="Nikolski M."/>
            <person name="Oztas S."/>
            <person name="Ozier-Kalogeropoulos O."/>
            <person name="Pellenz S."/>
            <person name="Potier S."/>
            <person name="Richard G.-F."/>
            <person name="Straub M.-L."/>
            <person name="Suleau A."/>
            <person name="Swennen D."/>
            <person name="Tekaia F."/>
            <person name="Wesolowski-Louvel M."/>
            <person name="Westhof E."/>
            <person name="Wirth B."/>
            <person name="Zeniou-Meyer M."/>
            <person name="Zivanovic Y."/>
            <person name="Bolotin-Fukuhara M."/>
            <person name="Thierry A."/>
            <person name="Bouchier C."/>
            <person name="Caudron B."/>
            <person name="Scarpelli C."/>
            <person name="Gaillardin C."/>
            <person name="Weissenbach J."/>
            <person name="Wincker P."/>
            <person name="Souciet J.-L."/>
        </authorList>
    </citation>
    <scope>NUCLEOTIDE SEQUENCE [LARGE SCALE GENOMIC DNA]</scope>
    <source>
        <strain>ATCC 2001 / BCRC 20586 / JCM 3761 / NBRC 0622 / NRRL Y-65 / CBS 138</strain>
    </source>
</reference>
<comment type="catalytic activity">
    <reaction>
        <text>aldehydo-D-ribose 5-phosphate = D-ribulose 5-phosphate</text>
        <dbReference type="Rhea" id="RHEA:14657"/>
        <dbReference type="ChEBI" id="CHEBI:58121"/>
        <dbReference type="ChEBI" id="CHEBI:58273"/>
        <dbReference type="EC" id="5.3.1.6"/>
    </reaction>
</comment>
<comment type="pathway">
    <text>Carbohydrate degradation; pentose phosphate pathway; D-ribose 5-phosphate from D-ribulose 5-phosphate (non-oxidative stage): step 1/1.</text>
</comment>
<comment type="subcellular location">
    <subcellularLocation>
        <location evidence="1">Cytoplasm</location>
    </subcellularLocation>
</comment>
<comment type="similarity">
    <text evidence="1">Belongs to the ribose 5-phosphate isomerase family.</text>
</comment>
<gene>
    <name type="primary">RKI1</name>
    <name type="ordered locus">CAGL0L03740g</name>
</gene>